<dbReference type="EC" id="3.6.5.-" evidence="1"/>
<dbReference type="EMBL" id="CP000233">
    <property type="protein sequence ID" value="ABD99905.1"/>
    <property type="molecule type" value="Genomic_DNA"/>
</dbReference>
<dbReference type="RefSeq" id="WP_011476163.1">
    <property type="nucleotide sequence ID" value="NC_007929.1"/>
</dbReference>
<dbReference type="RefSeq" id="YP_535988.1">
    <property type="nucleotide sequence ID" value="NC_007929.1"/>
</dbReference>
<dbReference type="SMR" id="Q1WT46"/>
<dbReference type="STRING" id="362948.LSL_1097"/>
<dbReference type="KEGG" id="lsl:LSL_1097"/>
<dbReference type="PATRIC" id="fig|362948.14.peg.1169"/>
<dbReference type="HOGENOM" id="CLU_011747_2_1_9"/>
<dbReference type="OrthoDB" id="9807318at2"/>
<dbReference type="Proteomes" id="UP000006559">
    <property type="component" value="Chromosome"/>
</dbReference>
<dbReference type="GO" id="GO:0005737">
    <property type="term" value="C:cytoplasm"/>
    <property type="evidence" value="ECO:0007669"/>
    <property type="project" value="UniProtKB-SubCell"/>
</dbReference>
<dbReference type="GO" id="GO:0005525">
    <property type="term" value="F:GTP binding"/>
    <property type="evidence" value="ECO:0007669"/>
    <property type="project" value="UniProtKB-UniRule"/>
</dbReference>
<dbReference type="GO" id="GO:0003924">
    <property type="term" value="F:GTPase activity"/>
    <property type="evidence" value="ECO:0007669"/>
    <property type="project" value="UniProtKB-UniRule"/>
</dbReference>
<dbReference type="GO" id="GO:0000287">
    <property type="term" value="F:magnesium ion binding"/>
    <property type="evidence" value="ECO:0007669"/>
    <property type="project" value="InterPro"/>
</dbReference>
<dbReference type="GO" id="GO:0042254">
    <property type="term" value="P:ribosome biogenesis"/>
    <property type="evidence" value="ECO:0007669"/>
    <property type="project" value="UniProtKB-UniRule"/>
</dbReference>
<dbReference type="CDD" id="cd01898">
    <property type="entry name" value="Obg"/>
    <property type="match status" value="1"/>
</dbReference>
<dbReference type="FunFam" id="2.70.210.12:FF:000001">
    <property type="entry name" value="GTPase Obg"/>
    <property type="match status" value="1"/>
</dbReference>
<dbReference type="Gene3D" id="3.30.300.350">
    <property type="entry name" value="GTP-binding protein OBG, C-terminal domain"/>
    <property type="match status" value="1"/>
</dbReference>
<dbReference type="Gene3D" id="2.70.210.12">
    <property type="entry name" value="GTP1/OBG domain"/>
    <property type="match status" value="1"/>
</dbReference>
<dbReference type="Gene3D" id="3.40.50.300">
    <property type="entry name" value="P-loop containing nucleotide triphosphate hydrolases"/>
    <property type="match status" value="1"/>
</dbReference>
<dbReference type="HAMAP" id="MF_01454">
    <property type="entry name" value="GTPase_Obg"/>
    <property type="match status" value="1"/>
</dbReference>
<dbReference type="InterPro" id="IPR031167">
    <property type="entry name" value="G_OBG"/>
</dbReference>
<dbReference type="InterPro" id="IPR006073">
    <property type="entry name" value="GTP-bd"/>
</dbReference>
<dbReference type="InterPro" id="IPR014100">
    <property type="entry name" value="GTP-bd_Obg/CgtA"/>
</dbReference>
<dbReference type="InterPro" id="IPR036346">
    <property type="entry name" value="GTP-bd_prot_GTP1/OBG_C_sf"/>
</dbReference>
<dbReference type="InterPro" id="IPR006074">
    <property type="entry name" value="GTP1-OBG_CS"/>
</dbReference>
<dbReference type="InterPro" id="IPR006169">
    <property type="entry name" value="GTP1_OBG_dom"/>
</dbReference>
<dbReference type="InterPro" id="IPR036726">
    <property type="entry name" value="GTP1_OBG_dom_sf"/>
</dbReference>
<dbReference type="InterPro" id="IPR045086">
    <property type="entry name" value="OBG_GTPase"/>
</dbReference>
<dbReference type="InterPro" id="IPR015349">
    <property type="entry name" value="OCT_dom"/>
</dbReference>
<dbReference type="InterPro" id="IPR027417">
    <property type="entry name" value="P-loop_NTPase"/>
</dbReference>
<dbReference type="NCBIfam" id="TIGR02729">
    <property type="entry name" value="Obg_CgtA"/>
    <property type="match status" value="1"/>
</dbReference>
<dbReference type="NCBIfam" id="TIGR03595">
    <property type="entry name" value="Obg_CgtA_exten"/>
    <property type="match status" value="1"/>
</dbReference>
<dbReference type="NCBIfam" id="NF008954">
    <property type="entry name" value="PRK12296.1"/>
    <property type="match status" value="1"/>
</dbReference>
<dbReference type="NCBIfam" id="NF008955">
    <property type="entry name" value="PRK12297.1"/>
    <property type="match status" value="1"/>
</dbReference>
<dbReference type="NCBIfam" id="NF008956">
    <property type="entry name" value="PRK12299.1"/>
    <property type="match status" value="1"/>
</dbReference>
<dbReference type="PANTHER" id="PTHR11702">
    <property type="entry name" value="DEVELOPMENTALLY REGULATED GTP-BINDING PROTEIN-RELATED"/>
    <property type="match status" value="1"/>
</dbReference>
<dbReference type="PANTHER" id="PTHR11702:SF31">
    <property type="entry name" value="MITOCHONDRIAL RIBOSOME-ASSOCIATED GTPASE 2"/>
    <property type="match status" value="1"/>
</dbReference>
<dbReference type="Pfam" id="PF09269">
    <property type="entry name" value="DUF1967"/>
    <property type="match status" value="1"/>
</dbReference>
<dbReference type="Pfam" id="PF01018">
    <property type="entry name" value="GTP1_OBG"/>
    <property type="match status" value="1"/>
</dbReference>
<dbReference type="Pfam" id="PF01926">
    <property type="entry name" value="MMR_HSR1"/>
    <property type="match status" value="1"/>
</dbReference>
<dbReference type="PIRSF" id="PIRSF002401">
    <property type="entry name" value="GTP_bd_Obg/CgtA"/>
    <property type="match status" value="1"/>
</dbReference>
<dbReference type="PRINTS" id="PR00326">
    <property type="entry name" value="GTP1OBG"/>
</dbReference>
<dbReference type="SUPFAM" id="SSF102741">
    <property type="entry name" value="Obg GTP-binding protein C-terminal domain"/>
    <property type="match status" value="1"/>
</dbReference>
<dbReference type="SUPFAM" id="SSF82051">
    <property type="entry name" value="Obg GTP-binding protein N-terminal domain"/>
    <property type="match status" value="1"/>
</dbReference>
<dbReference type="SUPFAM" id="SSF52540">
    <property type="entry name" value="P-loop containing nucleoside triphosphate hydrolases"/>
    <property type="match status" value="1"/>
</dbReference>
<dbReference type="PROSITE" id="PS51710">
    <property type="entry name" value="G_OBG"/>
    <property type="match status" value="1"/>
</dbReference>
<dbReference type="PROSITE" id="PS00905">
    <property type="entry name" value="GTP1_OBG"/>
    <property type="match status" value="1"/>
</dbReference>
<dbReference type="PROSITE" id="PS51883">
    <property type="entry name" value="OBG"/>
    <property type="match status" value="1"/>
</dbReference>
<dbReference type="PROSITE" id="PS51881">
    <property type="entry name" value="OCT"/>
    <property type="match status" value="1"/>
</dbReference>
<name>OBG_LIGS1</name>
<comment type="function">
    <text evidence="1">An essential GTPase which binds GTP, GDP and possibly (p)ppGpp with moderate affinity, with high nucleotide exchange rates and a fairly low GTP hydrolysis rate. Plays a role in control of the cell cycle, stress response, ribosome biogenesis and in those bacteria that undergo differentiation, in morphogenesis control.</text>
</comment>
<comment type="cofactor">
    <cofactor evidence="1">
        <name>Mg(2+)</name>
        <dbReference type="ChEBI" id="CHEBI:18420"/>
    </cofactor>
</comment>
<comment type="subunit">
    <text evidence="1">Monomer.</text>
</comment>
<comment type="subcellular location">
    <subcellularLocation>
        <location evidence="1">Cytoplasm</location>
    </subcellularLocation>
</comment>
<comment type="similarity">
    <text evidence="1">Belongs to the TRAFAC class OBG-HflX-like GTPase superfamily. OBG GTPase family.</text>
</comment>
<keyword id="KW-0963">Cytoplasm</keyword>
<keyword id="KW-0342">GTP-binding</keyword>
<keyword id="KW-0378">Hydrolase</keyword>
<keyword id="KW-0460">Magnesium</keyword>
<keyword id="KW-0479">Metal-binding</keyword>
<keyword id="KW-0547">Nucleotide-binding</keyword>
<keyword id="KW-1185">Reference proteome</keyword>
<sequence>MFVDQIKIEVKAGKGGDGMVAFRREKYVPNGGPAGGDGGKGGSIILKVDQGLRTLMDFRYHRIFKAKPGQNGMIKGMYGRGADDTYISVPQGTTVTDAETGELLGDLVEADDELVVAKGGCGGRGNIKFASPKNPAPEIAENGEPGEERKLKLELKVLADVGLVGFPSVGKSTLLSVVTSAKPKIAEYHFTTLVPNLGMVRLDDGRDYVMADLPGLIEGASQGVGLGIQFLRHVERTRVILHLIDMSGVEGRDPYDDFVKINEELKVYDPTLLDRPQIVVASKMDMPDSAKNLAEFKVKLAKDKTLKQVPEVMEISSLTHQGLKELTHRTADVLESTPKFETLAEKEQASKVYTFKEDEPAFKITRDSDATWVLSGEKLERLFKMTNFNHDESLMRFARQLRGMGVDDALRERGVKGGDLVRIEDFTFEFVE</sequence>
<feature type="chain" id="PRO_0000386003" description="GTPase Obg">
    <location>
        <begin position="1"/>
        <end position="432"/>
    </location>
</feature>
<feature type="domain" description="Obg" evidence="3">
    <location>
        <begin position="1"/>
        <end position="158"/>
    </location>
</feature>
<feature type="domain" description="OBG-type G" evidence="1">
    <location>
        <begin position="159"/>
        <end position="335"/>
    </location>
</feature>
<feature type="domain" description="OCT" evidence="2">
    <location>
        <begin position="354"/>
        <end position="432"/>
    </location>
</feature>
<feature type="binding site" evidence="1">
    <location>
        <begin position="165"/>
        <end position="172"/>
    </location>
    <ligand>
        <name>GTP</name>
        <dbReference type="ChEBI" id="CHEBI:37565"/>
    </ligand>
</feature>
<feature type="binding site" evidence="1">
    <location>
        <position position="172"/>
    </location>
    <ligand>
        <name>Mg(2+)</name>
        <dbReference type="ChEBI" id="CHEBI:18420"/>
    </ligand>
</feature>
<feature type="binding site" evidence="1">
    <location>
        <begin position="190"/>
        <end position="194"/>
    </location>
    <ligand>
        <name>GTP</name>
        <dbReference type="ChEBI" id="CHEBI:37565"/>
    </ligand>
</feature>
<feature type="binding site" evidence="1">
    <location>
        <position position="192"/>
    </location>
    <ligand>
        <name>Mg(2+)</name>
        <dbReference type="ChEBI" id="CHEBI:18420"/>
    </ligand>
</feature>
<feature type="binding site" evidence="1">
    <location>
        <begin position="212"/>
        <end position="215"/>
    </location>
    <ligand>
        <name>GTP</name>
        <dbReference type="ChEBI" id="CHEBI:37565"/>
    </ligand>
</feature>
<feature type="binding site" evidence="1">
    <location>
        <begin position="282"/>
        <end position="285"/>
    </location>
    <ligand>
        <name>GTP</name>
        <dbReference type="ChEBI" id="CHEBI:37565"/>
    </ligand>
</feature>
<feature type="binding site" evidence="1">
    <location>
        <begin position="316"/>
        <end position="318"/>
    </location>
    <ligand>
        <name>GTP</name>
        <dbReference type="ChEBI" id="CHEBI:37565"/>
    </ligand>
</feature>
<proteinExistence type="inferred from homology"/>
<reference key="1">
    <citation type="journal article" date="2006" name="Proc. Natl. Acad. Sci. U.S.A.">
        <title>Multireplicon genome architecture of Lactobacillus salivarius.</title>
        <authorList>
            <person name="Claesson M.J."/>
            <person name="Li Y."/>
            <person name="Leahy S."/>
            <person name="Canchaya C."/>
            <person name="van Pijkeren J.P."/>
            <person name="Cerdeno-Tarraga A.M."/>
            <person name="Parkhill J."/>
            <person name="Flynn S."/>
            <person name="O'Sullivan G.C."/>
            <person name="Collins J.K."/>
            <person name="Higgins D."/>
            <person name="Shanahan F."/>
            <person name="Fitzgerald G.F."/>
            <person name="van Sinderen D."/>
            <person name="O'Toole P.W."/>
        </authorList>
    </citation>
    <scope>NUCLEOTIDE SEQUENCE [LARGE SCALE GENOMIC DNA]</scope>
    <source>
        <strain>UCC118</strain>
    </source>
</reference>
<accession>Q1WT46</accession>
<evidence type="ECO:0000255" key="1">
    <source>
        <dbReference type="HAMAP-Rule" id="MF_01454"/>
    </source>
</evidence>
<evidence type="ECO:0000255" key="2">
    <source>
        <dbReference type="PROSITE-ProRule" id="PRU01229"/>
    </source>
</evidence>
<evidence type="ECO:0000255" key="3">
    <source>
        <dbReference type="PROSITE-ProRule" id="PRU01231"/>
    </source>
</evidence>
<organism>
    <name type="scientific">Ligilactobacillus salivarius (strain UCC118)</name>
    <name type="common">Lactobacillus salivarius</name>
    <dbReference type="NCBI Taxonomy" id="362948"/>
    <lineage>
        <taxon>Bacteria</taxon>
        <taxon>Bacillati</taxon>
        <taxon>Bacillota</taxon>
        <taxon>Bacilli</taxon>
        <taxon>Lactobacillales</taxon>
        <taxon>Lactobacillaceae</taxon>
        <taxon>Ligilactobacillus</taxon>
    </lineage>
</organism>
<protein>
    <recommendedName>
        <fullName evidence="1">GTPase Obg</fullName>
        <ecNumber evidence="1">3.6.5.-</ecNumber>
    </recommendedName>
    <alternativeName>
        <fullName evidence="1">GTP-binding protein Obg</fullName>
    </alternativeName>
</protein>
<gene>
    <name evidence="1" type="primary">obg</name>
    <name type="ordered locus">LSL_1097</name>
</gene>